<keyword id="KW-0067">ATP-binding</keyword>
<keyword id="KW-0315">Glutamine amidotransferase</keyword>
<keyword id="KW-0332">GMP biosynthesis</keyword>
<keyword id="KW-0436">Ligase</keyword>
<keyword id="KW-0547">Nucleotide-binding</keyword>
<keyword id="KW-0658">Purine biosynthesis</keyword>
<evidence type="ECO:0000255" key="1">
    <source>
        <dbReference type="HAMAP-Rule" id="MF_00344"/>
    </source>
</evidence>
<name>GUAA_PSEA8</name>
<gene>
    <name evidence="1" type="primary">guaA</name>
    <name type="ordered locus">PLES_12051</name>
</gene>
<sequence length="525" mass="57960">MSQDIHAHRILILDFGSQYTQLIARRVREIGVYCEIHPFDMSNEAIIAFAPRGIILAGGPESVHEADSPRAPQAVFDLKVPLFGICYGMQTMAEQMGGKVQGSDLREFGYARVDVVGKARLLDGIEDHVDDDGVLGLDVWMSHGDKVTEMPAGFHILASTPSCPIAAMADDARAYYGVQFHPEVTHTKQGLRILSRFVLDICGCAALWTPSNIVDDAIATVRAQVGSSKVLLGLSGGVDSSVVAALLHKAIGDQLTCVFVDNGLLRLHEGDQVMAMFAENMGVKVIRANAEDKFLGRLAGVADPEEKRKIIGRTFIEVFDEEATKLQDVKFLAQGTIYPDVIESAGAKTGKAHVIKSHHNVGGLPEDMQFELVEPLRELFKDEVRKIGLELGLPYDMVYRHPFPGPGLGVRILGEVKKEYADLLRQADHIFIEELRAFDWYHKTSQAFVVFQPVKSVGVVGDGRRYAWVVALRAVETIDFMTARWAHLPYELLEKVSNRIINEIAGISRVTYDVSSKPPATIEWE</sequence>
<proteinExistence type="inferred from homology"/>
<protein>
    <recommendedName>
        <fullName evidence="1">GMP synthase [glutamine-hydrolyzing]</fullName>
        <ecNumber evidence="1">6.3.5.2</ecNumber>
    </recommendedName>
    <alternativeName>
        <fullName evidence="1">GMP synthetase</fullName>
    </alternativeName>
    <alternativeName>
        <fullName evidence="1">Glutamine amidotransferase</fullName>
    </alternativeName>
</protein>
<dbReference type="EC" id="6.3.5.2" evidence="1"/>
<dbReference type="EMBL" id="FM209186">
    <property type="protein sequence ID" value="CAW25932.1"/>
    <property type="molecule type" value="Genomic_DNA"/>
</dbReference>
<dbReference type="RefSeq" id="WP_003105901.1">
    <property type="nucleotide sequence ID" value="NC_011770.1"/>
</dbReference>
<dbReference type="SMR" id="B7UXJ9"/>
<dbReference type="KEGG" id="pag:PLES_12051"/>
<dbReference type="HOGENOM" id="CLU_014340_0_5_6"/>
<dbReference type="UniPathway" id="UPA00189">
    <property type="reaction ID" value="UER00296"/>
</dbReference>
<dbReference type="GO" id="GO:0005829">
    <property type="term" value="C:cytosol"/>
    <property type="evidence" value="ECO:0007669"/>
    <property type="project" value="TreeGrafter"/>
</dbReference>
<dbReference type="GO" id="GO:0005524">
    <property type="term" value="F:ATP binding"/>
    <property type="evidence" value="ECO:0007669"/>
    <property type="project" value="UniProtKB-UniRule"/>
</dbReference>
<dbReference type="GO" id="GO:0003921">
    <property type="term" value="F:GMP synthase activity"/>
    <property type="evidence" value="ECO:0007669"/>
    <property type="project" value="InterPro"/>
</dbReference>
<dbReference type="CDD" id="cd01742">
    <property type="entry name" value="GATase1_GMP_Synthase"/>
    <property type="match status" value="1"/>
</dbReference>
<dbReference type="CDD" id="cd01997">
    <property type="entry name" value="GMP_synthase_C"/>
    <property type="match status" value="1"/>
</dbReference>
<dbReference type="FunFam" id="3.30.300.10:FF:000002">
    <property type="entry name" value="GMP synthase [glutamine-hydrolyzing]"/>
    <property type="match status" value="1"/>
</dbReference>
<dbReference type="FunFam" id="3.40.50.620:FF:000001">
    <property type="entry name" value="GMP synthase [glutamine-hydrolyzing]"/>
    <property type="match status" value="1"/>
</dbReference>
<dbReference type="FunFam" id="3.40.50.880:FF:000001">
    <property type="entry name" value="GMP synthase [glutamine-hydrolyzing]"/>
    <property type="match status" value="1"/>
</dbReference>
<dbReference type="Gene3D" id="3.30.300.10">
    <property type="match status" value="1"/>
</dbReference>
<dbReference type="Gene3D" id="3.40.50.880">
    <property type="match status" value="1"/>
</dbReference>
<dbReference type="Gene3D" id="3.40.50.620">
    <property type="entry name" value="HUPs"/>
    <property type="match status" value="1"/>
</dbReference>
<dbReference type="HAMAP" id="MF_00344">
    <property type="entry name" value="GMP_synthase"/>
    <property type="match status" value="1"/>
</dbReference>
<dbReference type="InterPro" id="IPR029062">
    <property type="entry name" value="Class_I_gatase-like"/>
</dbReference>
<dbReference type="InterPro" id="IPR017926">
    <property type="entry name" value="GATASE"/>
</dbReference>
<dbReference type="InterPro" id="IPR001674">
    <property type="entry name" value="GMP_synth_C"/>
</dbReference>
<dbReference type="InterPro" id="IPR004739">
    <property type="entry name" value="GMP_synth_GATase"/>
</dbReference>
<dbReference type="InterPro" id="IPR022955">
    <property type="entry name" value="GMP_synthase"/>
</dbReference>
<dbReference type="InterPro" id="IPR025777">
    <property type="entry name" value="GMPS_ATP_PPase_dom"/>
</dbReference>
<dbReference type="InterPro" id="IPR022310">
    <property type="entry name" value="NAD/GMP_synthase"/>
</dbReference>
<dbReference type="InterPro" id="IPR014729">
    <property type="entry name" value="Rossmann-like_a/b/a_fold"/>
</dbReference>
<dbReference type="NCBIfam" id="TIGR00884">
    <property type="entry name" value="guaA_Cterm"/>
    <property type="match status" value="1"/>
</dbReference>
<dbReference type="NCBIfam" id="TIGR00888">
    <property type="entry name" value="guaA_Nterm"/>
    <property type="match status" value="1"/>
</dbReference>
<dbReference type="NCBIfam" id="NF000848">
    <property type="entry name" value="PRK00074.1"/>
    <property type="match status" value="1"/>
</dbReference>
<dbReference type="PANTHER" id="PTHR11922:SF2">
    <property type="entry name" value="GMP SYNTHASE [GLUTAMINE-HYDROLYZING]"/>
    <property type="match status" value="1"/>
</dbReference>
<dbReference type="PANTHER" id="PTHR11922">
    <property type="entry name" value="GMP SYNTHASE-RELATED"/>
    <property type="match status" value="1"/>
</dbReference>
<dbReference type="Pfam" id="PF00117">
    <property type="entry name" value="GATase"/>
    <property type="match status" value="1"/>
</dbReference>
<dbReference type="Pfam" id="PF00958">
    <property type="entry name" value="GMP_synt_C"/>
    <property type="match status" value="1"/>
</dbReference>
<dbReference type="Pfam" id="PF02540">
    <property type="entry name" value="NAD_synthase"/>
    <property type="match status" value="1"/>
</dbReference>
<dbReference type="PRINTS" id="PR00097">
    <property type="entry name" value="ANTSNTHASEII"/>
</dbReference>
<dbReference type="PRINTS" id="PR00099">
    <property type="entry name" value="CPSGATASE"/>
</dbReference>
<dbReference type="PRINTS" id="PR00096">
    <property type="entry name" value="GATASE"/>
</dbReference>
<dbReference type="SUPFAM" id="SSF52402">
    <property type="entry name" value="Adenine nucleotide alpha hydrolases-like"/>
    <property type="match status" value="1"/>
</dbReference>
<dbReference type="SUPFAM" id="SSF52317">
    <property type="entry name" value="Class I glutamine amidotransferase-like"/>
    <property type="match status" value="1"/>
</dbReference>
<dbReference type="SUPFAM" id="SSF54810">
    <property type="entry name" value="GMP synthetase C-terminal dimerisation domain"/>
    <property type="match status" value="1"/>
</dbReference>
<dbReference type="PROSITE" id="PS51273">
    <property type="entry name" value="GATASE_TYPE_1"/>
    <property type="match status" value="1"/>
</dbReference>
<dbReference type="PROSITE" id="PS51553">
    <property type="entry name" value="GMPS_ATP_PPASE"/>
    <property type="match status" value="1"/>
</dbReference>
<feature type="chain" id="PRO_1000120366" description="GMP synthase [glutamine-hydrolyzing]">
    <location>
        <begin position="1"/>
        <end position="525"/>
    </location>
</feature>
<feature type="domain" description="Glutamine amidotransferase type-1" evidence="1">
    <location>
        <begin position="9"/>
        <end position="207"/>
    </location>
</feature>
<feature type="domain" description="GMPS ATP-PPase" evidence="1">
    <location>
        <begin position="208"/>
        <end position="400"/>
    </location>
</feature>
<feature type="active site" description="Nucleophile" evidence="1">
    <location>
        <position position="86"/>
    </location>
</feature>
<feature type="active site" evidence="1">
    <location>
        <position position="181"/>
    </location>
</feature>
<feature type="active site" evidence="1">
    <location>
        <position position="183"/>
    </location>
</feature>
<feature type="binding site" evidence="1">
    <location>
        <begin position="235"/>
        <end position="241"/>
    </location>
    <ligand>
        <name>ATP</name>
        <dbReference type="ChEBI" id="CHEBI:30616"/>
    </ligand>
</feature>
<comment type="function">
    <text evidence="1">Catalyzes the synthesis of GMP from XMP.</text>
</comment>
<comment type="catalytic activity">
    <reaction evidence="1">
        <text>XMP + L-glutamine + ATP + H2O = GMP + L-glutamate + AMP + diphosphate + 2 H(+)</text>
        <dbReference type="Rhea" id="RHEA:11680"/>
        <dbReference type="ChEBI" id="CHEBI:15377"/>
        <dbReference type="ChEBI" id="CHEBI:15378"/>
        <dbReference type="ChEBI" id="CHEBI:29985"/>
        <dbReference type="ChEBI" id="CHEBI:30616"/>
        <dbReference type="ChEBI" id="CHEBI:33019"/>
        <dbReference type="ChEBI" id="CHEBI:57464"/>
        <dbReference type="ChEBI" id="CHEBI:58115"/>
        <dbReference type="ChEBI" id="CHEBI:58359"/>
        <dbReference type="ChEBI" id="CHEBI:456215"/>
        <dbReference type="EC" id="6.3.5.2"/>
    </reaction>
</comment>
<comment type="pathway">
    <text evidence="1">Purine metabolism; GMP biosynthesis; GMP from XMP (L-Gln route): step 1/1.</text>
</comment>
<comment type="subunit">
    <text evidence="1">Homodimer.</text>
</comment>
<accession>B7UXJ9</accession>
<organism>
    <name type="scientific">Pseudomonas aeruginosa (strain LESB58)</name>
    <dbReference type="NCBI Taxonomy" id="557722"/>
    <lineage>
        <taxon>Bacteria</taxon>
        <taxon>Pseudomonadati</taxon>
        <taxon>Pseudomonadota</taxon>
        <taxon>Gammaproteobacteria</taxon>
        <taxon>Pseudomonadales</taxon>
        <taxon>Pseudomonadaceae</taxon>
        <taxon>Pseudomonas</taxon>
    </lineage>
</organism>
<reference key="1">
    <citation type="journal article" date="2009" name="Genome Res.">
        <title>Newly introduced genomic prophage islands are critical determinants of in vivo competitiveness in the Liverpool epidemic strain of Pseudomonas aeruginosa.</title>
        <authorList>
            <person name="Winstanley C."/>
            <person name="Langille M.G.I."/>
            <person name="Fothergill J.L."/>
            <person name="Kukavica-Ibrulj I."/>
            <person name="Paradis-Bleau C."/>
            <person name="Sanschagrin F."/>
            <person name="Thomson N.R."/>
            <person name="Winsor G.L."/>
            <person name="Quail M.A."/>
            <person name="Lennard N."/>
            <person name="Bignell A."/>
            <person name="Clarke L."/>
            <person name="Seeger K."/>
            <person name="Saunders D."/>
            <person name="Harris D."/>
            <person name="Parkhill J."/>
            <person name="Hancock R.E.W."/>
            <person name="Brinkman F.S.L."/>
            <person name="Levesque R.C."/>
        </authorList>
    </citation>
    <scope>NUCLEOTIDE SEQUENCE [LARGE SCALE GENOMIC DNA]</scope>
    <source>
        <strain>LESB58</strain>
    </source>
</reference>